<dbReference type="EC" id="6.1.1.17" evidence="1"/>
<dbReference type="EMBL" id="AP006628">
    <property type="protein sequence ID" value="BAD04225.1"/>
    <property type="molecule type" value="Genomic_DNA"/>
</dbReference>
<dbReference type="SMR" id="Q6YR76"/>
<dbReference type="STRING" id="262768.PAM_140"/>
<dbReference type="KEGG" id="poy:PAM_140"/>
<dbReference type="eggNOG" id="COG0008">
    <property type="taxonomic scope" value="Bacteria"/>
</dbReference>
<dbReference type="HOGENOM" id="CLU_015768_6_1_14"/>
<dbReference type="BioCyc" id="OYEL262768:G1G26-172-MONOMER"/>
<dbReference type="Proteomes" id="UP000002523">
    <property type="component" value="Chromosome"/>
</dbReference>
<dbReference type="GO" id="GO:0005829">
    <property type="term" value="C:cytosol"/>
    <property type="evidence" value="ECO:0007669"/>
    <property type="project" value="TreeGrafter"/>
</dbReference>
<dbReference type="GO" id="GO:0005524">
    <property type="term" value="F:ATP binding"/>
    <property type="evidence" value="ECO:0007669"/>
    <property type="project" value="UniProtKB-UniRule"/>
</dbReference>
<dbReference type="GO" id="GO:0004818">
    <property type="term" value="F:glutamate-tRNA ligase activity"/>
    <property type="evidence" value="ECO:0007669"/>
    <property type="project" value="UniProtKB-UniRule"/>
</dbReference>
<dbReference type="GO" id="GO:0000049">
    <property type="term" value="F:tRNA binding"/>
    <property type="evidence" value="ECO:0007669"/>
    <property type="project" value="InterPro"/>
</dbReference>
<dbReference type="GO" id="GO:0008270">
    <property type="term" value="F:zinc ion binding"/>
    <property type="evidence" value="ECO:0007669"/>
    <property type="project" value="InterPro"/>
</dbReference>
<dbReference type="GO" id="GO:0006424">
    <property type="term" value="P:glutamyl-tRNA aminoacylation"/>
    <property type="evidence" value="ECO:0007669"/>
    <property type="project" value="UniProtKB-UniRule"/>
</dbReference>
<dbReference type="CDD" id="cd00808">
    <property type="entry name" value="GluRS_core"/>
    <property type="match status" value="1"/>
</dbReference>
<dbReference type="Gene3D" id="1.10.10.350">
    <property type="match status" value="1"/>
</dbReference>
<dbReference type="Gene3D" id="3.40.50.620">
    <property type="entry name" value="HUPs"/>
    <property type="match status" value="2"/>
</dbReference>
<dbReference type="HAMAP" id="MF_00022">
    <property type="entry name" value="Glu_tRNA_synth_type1"/>
    <property type="match status" value="1"/>
</dbReference>
<dbReference type="InterPro" id="IPR045462">
    <property type="entry name" value="aa-tRNA-synth_I_cd-bd"/>
</dbReference>
<dbReference type="InterPro" id="IPR020751">
    <property type="entry name" value="aa-tRNA-synth_I_codon-bd_sub2"/>
</dbReference>
<dbReference type="InterPro" id="IPR001412">
    <property type="entry name" value="aa-tRNA-synth_I_CS"/>
</dbReference>
<dbReference type="InterPro" id="IPR008925">
    <property type="entry name" value="aa_tRNA-synth_I_cd-bd_sf"/>
</dbReference>
<dbReference type="InterPro" id="IPR004527">
    <property type="entry name" value="Glu-tRNA-ligase_bac/mito"/>
</dbReference>
<dbReference type="InterPro" id="IPR000924">
    <property type="entry name" value="Glu/Gln-tRNA-synth"/>
</dbReference>
<dbReference type="InterPro" id="IPR020058">
    <property type="entry name" value="Glu/Gln-tRNA-synth_Ib_cat-dom"/>
</dbReference>
<dbReference type="InterPro" id="IPR049940">
    <property type="entry name" value="GluQ/Sye"/>
</dbReference>
<dbReference type="InterPro" id="IPR033910">
    <property type="entry name" value="GluRS_core"/>
</dbReference>
<dbReference type="InterPro" id="IPR014729">
    <property type="entry name" value="Rossmann-like_a/b/a_fold"/>
</dbReference>
<dbReference type="NCBIfam" id="TIGR00464">
    <property type="entry name" value="gltX_bact"/>
    <property type="match status" value="1"/>
</dbReference>
<dbReference type="PANTHER" id="PTHR43311">
    <property type="entry name" value="GLUTAMATE--TRNA LIGASE"/>
    <property type="match status" value="1"/>
</dbReference>
<dbReference type="PANTHER" id="PTHR43311:SF2">
    <property type="entry name" value="GLUTAMATE--TRNA LIGASE, MITOCHONDRIAL-RELATED"/>
    <property type="match status" value="1"/>
</dbReference>
<dbReference type="Pfam" id="PF19269">
    <property type="entry name" value="Anticodon_2"/>
    <property type="match status" value="1"/>
</dbReference>
<dbReference type="Pfam" id="PF00749">
    <property type="entry name" value="tRNA-synt_1c"/>
    <property type="match status" value="2"/>
</dbReference>
<dbReference type="PRINTS" id="PR00987">
    <property type="entry name" value="TRNASYNTHGLU"/>
</dbReference>
<dbReference type="SUPFAM" id="SSF48163">
    <property type="entry name" value="An anticodon-binding domain of class I aminoacyl-tRNA synthetases"/>
    <property type="match status" value="1"/>
</dbReference>
<dbReference type="SUPFAM" id="SSF52374">
    <property type="entry name" value="Nucleotidylyl transferase"/>
    <property type="match status" value="1"/>
</dbReference>
<dbReference type="PROSITE" id="PS00178">
    <property type="entry name" value="AA_TRNA_LIGASE_I"/>
    <property type="match status" value="1"/>
</dbReference>
<evidence type="ECO:0000255" key="1">
    <source>
        <dbReference type="HAMAP-Rule" id="MF_00022"/>
    </source>
</evidence>
<reference key="1">
    <citation type="journal article" date="2004" name="Nat. Genet.">
        <title>Reductive evolution suggested from the complete genome sequence of a plant-pathogenic phytoplasma.</title>
        <authorList>
            <person name="Oshima K."/>
            <person name="Kakizawa S."/>
            <person name="Nishigawa H."/>
            <person name="Jung H.-Y."/>
            <person name="Wei W."/>
            <person name="Suzuki S."/>
            <person name="Arashida R."/>
            <person name="Nakata D."/>
            <person name="Miyata S."/>
            <person name="Ugaki M."/>
            <person name="Namba S."/>
        </authorList>
    </citation>
    <scope>NUCLEOTIDE SEQUENCE [LARGE SCALE GENOMIC DNA]</scope>
    <source>
        <strain>OY-M</strain>
    </source>
</reference>
<sequence length="449" mass="52352">MKKIKVRYAPSPTGFLHIGNARTALFNYLFAKQNQGEFIIRIEDTDFSRNVEGGEASQLKNLRWLGIDWSEGPDIQGPFGPYRQSERLAIYQKYAQKLLDQDLAYKEFQEGHTTFAIRFRVPTNQTFAFDDLIRGKLTFQSQEIEDFIILKSNGYPSYNFAVVIDDHLMQISHIFRGEEHITNTPKQIMIYQAFQWHLPQFAHMTLILNENKKKLSKRDANIMQFIEQYEKLGYLPQALFNFLSLLGFSPLSQTEILSPQELINLFDVARLNKAPAMFDKTKLDYLNNQHLRKLLPEVIASFILQKKYLALTTAPTNYKEWMTKFVALFQDRMHYMQQITDFYQLFFQSTPFLSQEATHFLQTNPQTTLILKTFYNVFDVIVFEKDVIANSIKQVTTQNDFAKKTLFMALRIGTTCKMHGPSIALLLELLGKKQVLKNLSYVLEQAQKF</sequence>
<organism>
    <name type="scientific">Onion yellows phytoplasma (strain OY-M)</name>
    <dbReference type="NCBI Taxonomy" id="262768"/>
    <lineage>
        <taxon>Bacteria</taxon>
        <taxon>Bacillati</taxon>
        <taxon>Mycoplasmatota</taxon>
        <taxon>Mollicutes</taxon>
        <taxon>Acholeplasmatales</taxon>
        <taxon>Acholeplasmataceae</taxon>
        <taxon>Candidatus Phytoplasma</taxon>
        <taxon>16SrI (Aster yellows group)</taxon>
    </lineage>
</organism>
<protein>
    <recommendedName>
        <fullName evidence="1">Glutamate--tRNA ligase</fullName>
        <ecNumber evidence="1">6.1.1.17</ecNumber>
    </recommendedName>
    <alternativeName>
        <fullName evidence="1">Glutamyl-tRNA synthetase</fullName>
        <shortName evidence="1">GluRS</shortName>
    </alternativeName>
</protein>
<proteinExistence type="inferred from homology"/>
<feature type="chain" id="PRO_0000119617" description="Glutamate--tRNA ligase">
    <location>
        <begin position="1"/>
        <end position="449"/>
    </location>
</feature>
<feature type="short sequence motif" description="'HIGH' region" evidence="1">
    <location>
        <begin position="10"/>
        <end position="20"/>
    </location>
</feature>
<feature type="short sequence motif" description="'KMSKS' region" evidence="1">
    <location>
        <begin position="214"/>
        <end position="218"/>
    </location>
</feature>
<feature type="binding site" evidence="1">
    <location>
        <position position="217"/>
    </location>
    <ligand>
        <name>ATP</name>
        <dbReference type="ChEBI" id="CHEBI:30616"/>
    </ligand>
</feature>
<gene>
    <name evidence="1" type="primary">gltX</name>
    <name type="ordered locus">PAM_140</name>
</gene>
<keyword id="KW-0030">Aminoacyl-tRNA synthetase</keyword>
<keyword id="KW-0067">ATP-binding</keyword>
<keyword id="KW-0963">Cytoplasm</keyword>
<keyword id="KW-0436">Ligase</keyword>
<keyword id="KW-0547">Nucleotide-binding</keyword>
<keyword id="KW-0648">Protein biosynthesis</keyword>
<accession>Q6YR76</accession>
<name>SYE_ONYPE</name>
<comment type="function">
    <text evidence="1">Catalyzes the attachment of glutamate to tRNA(Glu) in a two-step reaction: glutamate is first activated by ATP to form Glu-AMP and then transferred to the acceptor end of tRNA(Glu).</text>
</comment>
<comment type="catalytic activity">
    <reaction evidence="1">
        <text>tRNA(Glu) + L-glutamate + ATP = L-glutamyl-tRNA(Glu) + AMP + diphosphate</text>
        <dbReference type="Rhea" id="RHEA:23540"/>
        <dbReference type="Rhea" id="RHEA-COMP:9663"/>
        <dbReference type="Rhea" id="RHEA-COMP:9680"/>
        <dbReference type="ChEBI" id="CHEBI:29985"/>
        <dbReference type="ChEBI" id="CHEBI:30616"/>
        <dbReference type="ChEBI" id="CHEBI:33019"/>
        <dbReference type="ChEBI" id="CHEBI:78442"/>
        <dbReference type="ChEBI" id="CHEBI:78520"/>
        <dbReference type="ChEBI" id="CHEBI:456215"/>
        <dbReference type="EC" id="6.1.1.17"/>
    </reaction>
</comment>
<comment type="subunit">
    <text evidence="1">Monomer.</text>
</comment>
<comment type="subcellular location">
    <subcellularLocation>
        <location evidence="1">Cytoplasm</location>
    </subcellularLocation>
</comment>
<comment type="similarity">
    <text evidence="1">Belongs to the class-I aminoacyl-tRNA synthetase family. Glutamate--tRNA ligase type 1 subfamily.</text>
</comment>